<proteinExistence type="inferred from homology"/>
<accession>A0AM15</accession>
<keyword id="KW-0067">ATP-binding</keyword>
<keyword id="KW-1003">Cell membrane</keyword>
<keyword id="KW-0406">Ion transport</keyword>
<keyword id="KW-0472">Membrane</keyword>
<keyword id="KW-0547">Nucleotide-binding</keyword>
<keyword id="KW-0630">Potassium</keyword>
<keyword id="KW-0633">Potassium transport</keyword>
<keyword id="KW-0812">Transmembrane</keyword>
<keyword id="KW-1133">Transmembrane helix</keyword>
<keyword id="KW-0813">Transport</keyword>
<organism>
    <name type="scientific">Listeria welshimeri serovar 6b (strain ATCC 35897 / DSM 20650 / CCUG 15529 / CIP 8149 / NCTC 11857 / SLCC 5334 / V8)</name>
    <dbReference type="NCBI Taxonomy" id="386043"/>
    <lineage>
        <taxon>Bacteria</taxon>
        <taxon>Bacillati</taxon>
        <taxon>Bacillota</taxon>
        <taxon>Bacilli</taxon>
        <taxon>Bacillales</taxon>
        <taxon>Listeriaceae</taxon>
        <taxon>Listeria</taxon>
    </lineage>
</organism>
<feature type="chain" id="PRO_1000022292" description="Potassium-transporting ATPase KdpC subunit">
    <location>
        <begin position="1"/>
        <end position="190"/>
    </location>
</feature>
<feature type="transmembrane region" description="Helical" evidence="1">
    <location>
        <begin position="13"/>
        <end position="33"/>
    </location>
</feature>
<gene>
    <name evidence="1" type="primary">kdpC</name>
    <name type="ordered locus">lwe2629</name>
</gene>
<comment type="function">
    <text evidence="1">Part of the high-affinity ATP-driven potassium transport (or Kdp) system, which catalyzes the hydrolysis of ATP coupled with the electrogenic transport of potassium into the cytoplasm. This subunit acts as a catalytic chaperone that increases the ATP-binding affinity of the ATP-hydrolyzing subunit KdpB by the formation of a transient KdpB/KdpC/ATP ternary complex.</text>
</comment>
<comment type="subunit">
    <text evidence="1">The system is composed of three essential subunits: KdpA, KdpB and KdpC.</text>
</comment>
<comment type="subcellular location">
    <subcellularLocation>
        <location evidence="1">Cell membrane</location>
        <topology evidence="1">Single-pass membrane protein</topology>
    </subcellularLocation>
</comment>
<comment type="similarity">
    <text evidence="1">Belongs to the KdpC family.</text>
</comment>
<reference key="1">
    <citation type="journal article" date="2006" name="J. Bacteriol.">
        <title>Whole-genome sequence of Listeria welshimeri reveals common steps in genome reduction with Listeria innocua as compared to Listeria monocytogenes.</title>
        <authorList>
            <person name="Hain T."/>
            <person name="Steinweg C."/>
            <person name="Kuenne C.T."/>
            <person name="Billion A."/>
            <person name="Ghai R."/>
            <person name="Chatterjee S.S."/>
            <person name="Domann E."/>
            <person name="Kaerst U."/>
            <person name="Goesmann A."/>
            <person name="Bekel T."/>
            <person name="Bartels D."/>
            <person name="Kaiser O."/>
            <person name="Meyer F."/>
            <person name="Puehler A."/>
            <person name="Weisshaar B."/>
            <person name="Wehland J."/>
            <person name="Liang C."/>
            <person name="Dandekar T."/>
            <person name="Lampidis R."/>
            <person name="Kreft J."/>
            <person name="Goebel W."/>
            <person name="Chakraborty T."/>
        </authorList>
    </citation>
    <scope>NUCLEOTIDE SEQUENCE [LARGE SCALE GENOMIC DNA]</scope>
    <source>
        <strain>ATCC 35897 / DSM 20650 / CCUG 15529 / CIP 8149 / NCTC 11857 / SLCC 5334 / V8</strain>
    </source>
</reference>
<sequence length="190" mass="20756">MKRFMQIWKPAVVGFLLLTLVCGVVYPGIVTIIAGAAFQDKANGSIIERKLANGETGKYGSNEIGQTFTKPEYLIGRAASDGAATNLNPTSEEQKQLVEKRIAWWHKLDPTNNRVIPMDLVTASASGVDPDISEAAAAYQVDRISRERGISTKTVKEIIAEHTSNRLLGFWGEPTVNVLQVNLALDSLKM</sequence>
<dbReference type="EMBL" id="AM263198">
    <property type="protein sequence ID" value="CAK22047.1"/>
    <property type="molecule type" value="Genomic_DNA"/>
</dbReference>
<dbReference type="RefSeq" id="WP_011703325.1">
    <property type="nucleotide sequence ID" value="NC_008555.1"/>
</dbReference>
<dbReference type="SMR" id="A0AM15"/>
<dbReference type="STRING" id="386043.lwe2629"/>
<dbReference type="GeneID" id="61190553"/>
<dbReference type="KEGG" id="lwe:lwe2629"/>
<dbReference type="eggNOG" id="COG2156">
    <property type="taxonomic scope" value="Bacteria"/>
</dbReference>
<dbReference type="HOGENOM" id="CLU_077094_2_0_9"/>
<dbReference type="OrthoDB" id="9809491at2"/>
<dbReference type="Proteomes" id="UP000000779">
    <property type="component" value="Chromosome"/>
</dbReference>
<dbReference type="GO" id="GO:0005886">
    <property type="term" value="C:plasma membrane"/>
    <property type="evidence" value="ECO:0007669"/>
    <property type="project" value="UniProtKB-SubCell"/>
</dbReference>
<dbReference type="GO" id="GO:0005524">
    <property type="term" value="F:ATP binding"/>
    <property type="evidence" value="ECO:0007669"/>
    <property type="project" value="UniProtKB-UniRule"/>
</dbReference>
<dbReference type="GO" id="GO:0008556">
    <property type="term" value="F:P-type potassium transmembrane transporter activity"/>
    <property type="evidence" value="ECO:0007669"/>
    <property type="project" value="InterPro"/>
</dbReference>
<dbReference type="HAMAP" id="MF_00276">
    <property type="entry name" value="KdpC"/>
    <property type="match status" value="1"/>
</dbReference>
<dbReference type="InterPro" id="IPR003820">
    <property type="entry name" value="KdpC"/>
</dbReference>
<dbReference type="NCBIfam" id="TIGR00681">
    <property type="entry name" value="kdpC"/>
    <property type="match status" value="1"/>
</dbReference>
<dbReference type="PANTHER" id="PTHR30042">
    <property type="entry name" value="POTASSIUM-TRANSPORTING ATPASE C CHAIN"/>
    <property type="match status" value="1"/>
</dbReference>
<dbReference type="PANTHER" id="PTHR30042:SF2">
    <property type="entry name" value="POTASSIUM-TRANSPORTING ATPASE KDPC SUBUNIT"/>
    <property type="match status" value="1"/>
</dbReference>
<dbReference type="Pfam" id="PF02669">
    <property type="entry name" value="KdpC"/>
    <property type="match status" value="1"/>
</dbReference>
<dbReference type="PIRSF" id="PIRSF001296">
    <property type="entry name" value="K_ATPase_KdpC"/>
    <property type="match status" value="1"/>
</dbReference>
<evidence type="ECO:0000255" key="1">
    <source>
        <dbReference type="HAMAP-Rule" id="MF_00276"/>
    </source>
</evidence>
<name>KDPC_LISW6</name>
<protein>
    <recommendedName>
        <fullName evidence="1">Potassium-transporting ATPase KdpC subunit</fullName>
    </recommendedName>
    <alternativeName>
        <fullName evidence="1">ATP phosphohydrolase [potassium-transporting] C chain</fullName>
    </alternativeName>
    <alternativeName>
        <fullName evidence="1">Potassium-binding and translocating subunit C</fullName>
    </alternativeName>
    <alternativeName>
        <fullName evidence="1">Potassium-translocating ATPase C chain</fullName>
    </alternativeName>
</protein>